<sequence length="358" mass="39738">MSAALEKPQIIAHIQKSLNYTVFESKWIPCSAKFVCMGNFARGTGVMQIYEIQHGELQLVREIEKSKPIKCGTFGATSLQQRHLATGDFDGNLNVWNLEVPDSPVYSVKAHKEIINAIDGVGGLGIGDGAPEIVTGSRDGTVKVWDSRQKDTPVVNMEPTEGETKRDCWTVAFGHAFNDQDRCVCAGYDNGDIKLFDLRNMSLRWEKNIRNGVCSVEFDRKDINMNKLVATSLEGKFHVFDMRTQHPSKGFASVSEKAHKSTIWQVRHLPQNRDVFMTAGGAGNLHLWKYEYPAQRSKKGADDVEMGVAGSVNLLQNVTLSTQPISSLDWSPDKQGLCVCSSFDQSVRVLIVTKLNTV</sequence>
<feature type="chain" id="PRO_0000301673" description="Dynein axonemal assembly factor 10">
    <location>
        <begin position="1"/>
        <end position="358"/>
    </location>
</feature>
<feature type="repeat" description="WD 1">
    <location>
        <begin position="64"/>
        <end position="106"/>
    </location>
</feature>
<feature type="repeat" description="WD 2">
    <location>
        <begin position="116"/>
        <end position="155"/>
    </location>
</feature>
<feature type="repeat" description="WD 3">
    <location>
        <begin position="163"/>
        <end position="206"/>
    </location>
</feature>
<feature type="repeat" description="WD 4">
    <location>
        <begin position="208"/>
        <end position="250"/>
    </location>
</feature>
<feature type="repeat" description="WD 5">
    <location>
        <begin position="258"/>
        <end position="298"/>
    </location>
</feature>
<feature type="repeat" description="WD 6">
    <location>
        <begin position="320"/>
        <end position="358"/>
    </location>
</feature>
<protein>
    <recommendedName>
        <fullName evidence="3">Dynein axonemal assembly factor 10</fullName>
    </recommendedName>
    <alternativeName>
        <fullName>WD repeat-containing protein 92</fullName>
    </alternativeName>
</protein>
<organism>
    <name type="scientific">Danio rerio</name>
    <name type="common">Zebrafish</name>
    <name type="synonym">Brachydanio rerio</name>
    <dbReference type="NCBI Taxonomy" id="7955"/>
    <lineage>
        <taxon>Eukaryota</taxon>
        <taxon>Metazoa</taxon>
        <taxon>Chordata</taxon>
        <taxon>Craniata</taxon>
        <taxon>Vertebrata</taxon>
        <taxon>Euteleostomi</taxon>
        <taxon>Actinopterygii</taxon>
        <taxon>Neopterygii</taxon>
        <taxon>Teleostei</taxon>
        <taxon>Ostariophysi</taxon>
        <taxon>Cypriniformes</taxon>
        <taxon>Danionidae</taxon>
        <taxon>Danioninae</taxon>
        <taxon>Danio</taxon>
    </lineage>
</organism>
<keyword id="KW-0053">Apoptosis</keyword>
<keyword id="KW-0963">Cytoplasm</keyword>
<keyword id="KW-1185">Reference proteome</keyword>
<keyword id="KW-0677">Repeat</keyword>
<keyword id="KW-0853">WD repeat</keyword>
<gene>
    <name type="primary">dnaaf10</name>
    <name type="synonym">wdr92</name>
    <name type="ORF">zgc:110253</name>
</gene>
<accession>Q561Y0</accession>
<name>DAA10_DANRE</name>
<reference key="1">
    <citation type="submission" date="2005-04" db="EMBL/GenBank/DDBJ databases">
        <authorList>
            <consortium name="NIH - Zebrafish Gene Collection (ZGC) project"/>
        </authorList>
    </citation>
    <scope>NUCLEOTIDE SEQUENCE [LARGE SCALE MRNA]</scope>
    <source>
        <tissue>Ovary</tissue>
    </source>
</reference>
<evidence type="ECO:0000250" key="1">
    <source>
        <dbReference type="UniProtKB" id="A8J3F6"/>
    </source>
</evidence>
<evidence type="ECO:0000250" key="2">
    <source>
        <dbReference type="UniProtKB" id="Q96MX6"/>
    </source>
</evidence>
<evidence type="ECO:0000305" key="3"/>
<comment type="function">
    <text evidence="1">Key assembly factor specifically required for the stability of axonemal dynein heavy chains in cytoplasm.</text>
</comment>
<comment type="subunit">
    <text evidence="1 2">Interacts with PIH1D1; the interaction associates DNAAF10 with the R2TP complex (By similarity). Interacts with several dynein axonemal assembly factors (By similarity).</text>
</comment>
<comment type="subcellular location">
    <subcellularLocation>
        <location evidence="1">Dynein axonemal particle</location>
    </subcellularLocation>
</comment>
<dbReference type="EMBL" id="BC092828">
    <property type="protein sequence ID" value="AAH92828.1"/>
    <property type="molecule type" value="mRNA"/>
</dbReference>
<dbReference type="RefSeq" id="NP_001017621.1">
    <property type="nucleotide sequence ID" value="NM_001017621.1"/>
</dbReference>
<dbReference type="SMR" id="Q561Y0"/>
<dbReference type="FunCoup" id="Q561Y0">
    <property type="interactions" value="685"/>
</dbReference>
<dbReference type="STRING" id="7955.ENSDARP00000054317"/>
<dbReference type="PaxDb" id="7955-ENSDARP00000054317"/>
<dbReference type="DNASU" id="550284"/>
<dbReference type="Ensembl" id="ENSDART00000054318">
    <property type="protein sequence ID" value="ENSDARP00000054317"/>
    <property type="gene ID" value="ENSDARG00000037334"/>
</dbReference>
<dbReference type="GeneID" id="550284"/>
<dbReference type="KEGG" id="dre:550284"/>
<dbReference type="AGR" id="ZFIN:ZDB-GENE-050417-93"/>
<dbReference type="CTD" id="116143"/>
<dbReference type="ZFIN" id="ZDB-GENE-050417-93">
    <property type="gene designation" value="dnaaf10"/>
</dbReference>
<dbReference type="eggNOG" id="ENOG502QRKB">
    <property type="taxonomic scope" value="Eukaryota"/>
</dbReference>
<dbReference type="HOGENOM" id="CLU_062543_0_0_1"/>
<dbReference type="InParanoid" id="Q561Y0"/>
<dbReference type="OMA" id="CLWKYNY"/>
<dbReference type="OrthoDB" id="10248252at2759"/>
<dbReference type="PhylomeDB" id="Q561Y0"/>
<dbReference type="TreeFam" id="TF351064"/>
<dbReference type="PRO" id="PR:Q561Y0"/>
<dbReference type="Proteomes" id="UP000000437">
    <property type="component" value="Chromosome 13"/>
</dbReference>
<dbReference type="Bgee" id="ENSDARG00000037334">
    <property type="expression patterns" value="Expressed in testis and 27 other cell types or tissues"/>
</dbReference>
<dbReference type="ExpressionAtlas" id="Q561Y0">
    <property type="expression patterns" value="baseline and differential"/>
</dbReference>
<dbReference type="GO" id="GO:0120293">
    <property type="term" value="C:dynein axonemal particle"/>
    <property type="evidence" value="ECO:0000250"/>
    <property type="project" value="UniProtKB"/>
</dbReference>
<dbReference type="GO" id="GO:0043130">
    <property type="term" value="F:ubiquitin binding"/>
    <property type="evidence" value="ECO:0000318"/>
    <property type="project" value="GO_Central"/>
</dbReference>
<dbReference type="GO" id="GO:0006915">
    <property type="term" value="P:apoptotic process"/>
    <property type="evidence" value="ECO:0007669"/>
    <property type="project" value="UniProtKB-KW"/>
</dbReference>
<dbReference type="GO" id="GO:0070286">
    <property type="term" value="P:axonemal dynein complex assembly"/>
    <property type="evidence" value="ECO:0000250"/>
    <property type="project" value="UniProtKB"/>
</dbReference>
<dbReference type="FunFam" id="2.130.10.10:FF:000258">
    <property type="entry name" value="WD repeat-containing protein 92"/>
    <property type="match status" value="1"/>
</dbReference>
<dbReference type="Gene3D" id="2.130.10.10">
    <property type="entry name" value="YVTN repeat-like/Quinoprotein amine dehydrogenase"/>
    <property type="match status" value="1"/>
</dbReference>
<dbReference type="InterPro" id="IPR015943">
    <property type="entry name" value="WD40/YVTN_repeat-like_dom_sf"/>
</dbReference>
<dbReference type="InterPro" id="IPR036322">
    <property type="entry name" value="WD40_repeat_dom_sf"/>
</dbReference>
<dbReference type="InterPro" id="IPR001680">
    <property type="entry name" value="WD40_rpt"/>
</dbReference>
<dbReference type="PANTHER" id="PTHR10971">
    <property type="entry name" value="MRNA EXPORT FACTOR AND BUB3"/>
    <property type="match status" value="1"/>
</dbReference>
<dbReference type="Pfam" id="PF00400">
    <property type="entry name" value="WD40"/>
    <property type="match status" value="2"/>
</dbReference>
<dbReference type="SMART" id="SM00320">
    <property type="entry name" value="WD40"/>
    <property type="match status" value="5"/>
</dbReference>
<dbReference type="SUPFAM" id="SSF50978">
    <property type="entry name" value="WD40 repeat-like"/>
    <property type="match status" value="1"/>
</dbReference>
<dbReference type="PROSITE" id="PS00678">
    <property type="entry name" value="WD_REPEATS_1"/>
    <property type="match status" value="2"/>
</dbReference>
<dbReference type="PROSITE" id="PS50082">
    <property type="entry name" value="WD_REPEATS_2"/>
    <property type="match status" value="1"/>
</dbReference>
<dbReference type="PROSITE" id="PS50294">
    <property type="entry name" value="WD_REPEATS_REGION"/>
    <property type="match status" value="1"/>
</dbReference>
<proteinExistence type="evidence at transcript level"/>